<sequence>MTAVAPEGRPLLRIEARNAQTPIERKPSWIRTRLRTGPQYQDVKGLVQSAGLHTVCEEAGCPNIYECWEDREATFLIGGEVCTRRCDFCQIDSGRPAPLDHDEPRRVAESVATMGLRYATVTGVARDDLADGGSWLYAETVRQIHARSADTGVEVLIPDFGGRPDQLGEVFEAAPEVLAHNLETVPRIFRRIRPAFRYERSLDVLRQARQAGLVTKSNLILGLGETAEEIHTALRDLRSAGCELLTVTQYLRPTPRHHPVERWVRPEEFLDWGRVGAELGFSGVMSGPLVRSSYRASRLYQQAMTARDQDRSEMSVPPESVSENSHGQRPSPW</sequence>
<accession>Q2J897</accession>
<evidence type="ECO:0000255" key="1">
    <source>
        <dbReference type="HAMAP-Rule" id="MF_00206"/>
    </source>
</evidence>
<evidence type="ECO:0000255" key="2">
    <source>
        <dbReference type="PROSITE-ProRule" id="PRU01266"/>
    </source>
</evidence>
<evidence type="ECO:0000256" key="3">
    <source>
        <dbReference type="SAM" id="MobiDB-lite"/>
    </source>
</evidence>
<feature type="chain" id="PRO_1000012224" description="Lipoyl synthase">
    <location>
        <begin position="1"/>
        <end position="333"/>
    </location>
</feature>
<feature type="domain" description="Radical SAM core" evidence="2">
    <location>
        <begin position="68"/>
        <end position="282"/>
    </location>
</feature>
<feature type="region of interest" description="Disordered" evidence="3">
    <location>
        <begin position="301"/>
        <end position="333"/>
    </location>
</feature>
<feature type="compositionally biased region" description="Low complexity" evidence="3">
    <location>
        <begin position="314"/>
        <end position="325"/>
    </location>
</feature>
<feature type="binding site" evidence="1">
    <location>
        <position position="56"/>
    </location>
    <ligand>
        <name>[4Fe-4S] cluster</name>
        <dbReference type="ChEBI" id="CHEBI:49883"/>
        <label>1</label>
    </ligand>
</feature>
<feature type="binding site" evidence="1">
    <location>
        <position position="61"/>
    </location>
    <ligand>
        <name>[4Fe-4S] cluster</name>
        <dbReference type="ChEBI" id="CHEBI:49883"/>
        <label>1</label>
    </ligand>
</feature>
<feature type="binding site" evidence="1">
    <location>
        <position position="67"/>
    </location>
    <ligand>
        <name>[4Fe-4S] cluster</name>
        <dbReference type="ChEBI" id="CHEBI:49883"/>
        <label>1</label>
    </ligand>
</feature>
<feature type="binding site" evidence="1">
    <location>
        <position position="82"/>
    </location>
    <ligand>
        <name>[4Fe-4S] cluster</name>
        <dbReference type="ChEBI" id="CHEBI:49883"/>
        <label>2</label>
        <note>4Fe-4S-S-AdoMet</note>
    </ligand>
</feature>
<feature type="binding site" evidence="1">
    <location>
        <position position="86"/>
    </location>
    <ligand>
        <name>[4Fe-4S] cluster</name>
        <dbReference type="ChEBI" id="CHEBI:49883"/>
        <label>2</label>
        <note>4Fe-4S-S-AdoMet</note>
    </ligand>
</feature>
<feature type="binding site" evidence="1">
    <location>
        <position position="89"/>
    </location>
    <ligand>
        <name>[4Fe-4S] cluster</name>
        <dbReference type="ChEBI" id="CHEBI:49883"/>
        <label>2</label>
        <note>4Fe-4S-S-AdoMet</note>
    </ligand>
</feature>
<feature type="binding site" evidence="1">
    <location>
        <position position="293"/>
    </location>
    <ligand>
        <name>[4Fe-4S] cluster</name>
        <dbReference type="ChEBI" id="CHEBI:49883"/>
        <label>1</label>
    </ligand>
</feature>
<protein>
    <recommendedName>
        <fullName evidence="1">Lipoyl synthase</fullName>
        <ecNumber evidence="1">2.8.1.8</ecNumber>
    </recommendedName>
    <alternativeName>
        <fullName evidence="1">Lip-syn</fullName>
        <shortName evidence="1">LS</shortName>
    </alternativeName>
    <alternativeName>
        <fullName evidence="1">Lipoate synthase</fullName>
    </alternativeName>
    <alternativeName>
        <fullName evidence="1">Lipoic acid synthase</fullName>
    </alternativeName>
    <alternativeName>
        <fullName evidence="1">Sulfur insertion protein LipA</fullName>
    </alternativeName>
</protein>
<reference key="1">
    <citation type="journal article" date="2007" name="Genome Res.">
        <title>Genome characteristics of facultatively symbiotic Frankia sp. strains reflect host range and host plant biogeography.</title>
        <authorList>
            <person name="Normand P."/>
            <person name="Lapierre P."/>
            <person name="Tisa L.S."/>
            <person name="Gogarten J.P."/>
            <person name="Alloisio N."/>
            <person name="Bagnarol E."/>
            <person name="Bassi C.A."/>
            <person name="Berry A.M."/>
            <person name="Bickhart D.M."/>
            <person name="Choisne N."/>
            <person name="Couloux A."/>
            <person name="Cournoyer B."/>
            <person name="Cruveiller S."/>
            <person name="Daubin V."/>
            <person name="Demange N."/>
            <person name="Francino M.P."/>
            <person name="Goltsman E."/>
            <person name="Huang Y."/>
            <person name="Kopp O.R."/>
            <person name="Labarre L."/>
            <person name="Lapidus A."/>
            <person name="Lavire C."/>
            <person name="Marechal J."/>
            <person name="Martinez M."/>
            <person name="Mastronunzio J.E."/>
            <person name="Mullin B.C."/>
            <person name="Niemann J."/>
            <person name="Pujic P."/>
            <person name="Rawnsley T."/>
            <person name="Rouy Z."/>
            <person name="Schenowitz C."/>
            <person name="Sellstedt A."/>
            <person name="Tavares F."/>
            <person name="Tomkins J.P."/>
            <person name="Vallenet D."/>
            <person name="Valverde C."/>
            <person name="Wall L.G."/>
            <person name="Wang Y."/>
            <person name="Medigue C."/>
            <person name="Benson D.R."/>
        </authorList>
    </citation>
    <scope>NUCLEOTIDE SEQUENCE [LARGE SCALE GENOMIC DNA]</scope>
    <source>
        <strain>DSM 45818 / CECT 9043 / HFP020203 / CcI3</strain>
    </source>
</reference>
<gene>
    <name evidence="1" type="primary">lipA</name>
    <name type="ordered locus">Francci3_3138</name>
</gene>
<dbReference type="EC" id="2.8.1.8" evidence="1"/>
<dbReference type="EMBL" id="CP000249">
    <property type="protein sequence ID" value="ABD12495.1"/>
    <property type="molecule type" value="Genomic_DNA"/>
</dbReference>
<dbReference type="RefSeq" id="WP_011437523.1">
    <property type="nucleotide sequence ID" value="NZ_MSEA01000231.1"/>
</dbReference>
<dbReference type="SMR" id="Q2J897"/>
<dbReference type="STRING" id="106370.Francci3_3138"/>
<dbReference type="KEGG" id="fra:Francci3_3138"/>
<dbReference type="eggNOG" id="COG0320">
    <property type="taxonomic scope" value="Bacteria"/>
</dbReference>
<dbReference type="HOGENOM" id="CLU_033144_2_1_11"/>
<dbReference type="OrthoDB" id="9787898at2"/>
<dbReference type="PhylomeDB" id="Q2J897"/>
<dbReference type="UniPathway" id="UPA00538">
    <property type="reaction ID" value="UER00593"/>
</dbReference>
<dbReference type="Proteomes" id="UP000001937">
    <property type="component" value="Chromosome"/>
</dbReference>
<dbReference type="GO" id="GO:0005737">
    <property type="term" value="C:cytoplasm"/>
    <property type="evidence" value="ECO:0007669"/>
    <property type="project" value="UniProtKB-SubCell"/>
</dbReference>
<dbReference type="GO" id="GO:0051539">
    <property type="term" value="F:4 iron, 4 sulfur cluster binding"/>
    <property type="evidence" value="ECO:0007669"/>
    <property type="project" value="UniProtKB-UniRule"/>
</dbReference>
<dbReference type="GO" id="GO:0016992">
    <property type="term" value="F:lipoate synthase activity"/>
    <property type="evidence" value="ECO:0007669"/>
    <property type="project" value="UniProtKB-UniRule"/>
</dbReference>
<dbReference type="GO" id="GO:0046872">
    <property type="term" value="F:metal ion binding"/>
    <property type="evidence" value="ECO:0007669"/>
    <property type="project" value="UniProtKB-KW"/>
</dbReference>
<dbReference type="CDD" id="cd01335">
    <property type="entry name" value="Radical_SAM"/>
    <property type="match status" value="1"/>
</dbReference>
<dbReference type="Gene3D" id="3.20.20.70">
    <property type="entry name" value="Aldolase class I"/>
    <property type="match status" value="1"/>
</dbReference>
<dbReference type="HAMAP" id="MF_00206">
    <property type="entry name" value="Lipoyl_synth"/>
    <property type="match status" value="1"/>
</dbReference>
<dbReference type="InterPro" id="IPR013785">
    <property type="entry name" value="Aldolase_TIM"/>
</dbReference>
<dbReference type="InterPro" id="IPR006638">
    <property type="entry name" value="Elp3/MiaA/NifB-like_rSAM"/>
</dbReference>
<dbReference type="InterPro" id="IPR031691">
    <property type="entry name" value="LIAS_N"/>
</dbReference>
<dbReference type="InterPro" id="IPR003698">
    <property type="entry name" value="Lipoyl_synth"/>
</dbReference>
<dbReference type="InterPro" id="IPR007197">
    <property type="entry name" value="rSAM"/>
</dbReference>
<dbReference type="NCBIfam" id="TIGR00510">
    <property type="entry name" value="lipA"/>
    <property type="match status" value="1"/>
</dbReference>
<dbReference type="NCBIfam" id="NF004019">
    <property type="entry name" value="PRK05481.1"/>
    <property type="match status" value="1"/>
</dbReference>
<dbReference type="NCBIfam" id="NF009544">
    <property type="entry name" value="PRK12928.1"/>
    <property type="match status" value="1"/>
</dbReference>
<dbReference type="PANTHER" id="PTHR10949">
    <property type="entry name" value="LIPOYL SYNTHASE"/>
    <property type="match status" value="1"/>
</dbReference>
<dbReference type="PANTHER" id="PTHR10949:SF0">
    <property type="entry name" value="LIPOYL SYNTHASE, MITOCHONDRIAL"/>
    <property type="match status" value="1"/>
</dbReference>
<dbReference type="Pfam" id="PF16881">
    <property type="entry name" value="LIAS_N"/>
    <property type="match status" value="1"/>
</dbReference>
<dbReference type="Pfam" id="PF04055">
    <property type="entry name" value="Radical_SAM"/>
    <property type="match status" value="1"/>
</dbReference>
<dbReference type="PIRSF" id="PIRSF005963">
    <property type="entry name" value="Lipoyl_synth"/>
    <property type="match status" value="1"/>
</dbReference>
<dbReference type="SFLD" id="SFLDF00271">
    <property type="entry name" value="lipoyl_synthase"/>
    <property type="match status" value="1"/>
</dbReference>
<dbReference type="SFLD" id="SFLDG01058">
    <property type="entry name" value="lipoyl_synthase_like"/>
    <property type="match status" value="1"/>
</dbReference>
<dbReference type="SMART" id="SM00729">
    <property type="entry name" value="Elp3"/>
    <property type="match status" value="1"/>
</dbReference>
<dbReference type="SUPFAM" id="SSF102114">
    <property type="entry name" value="Radical SAM enzymes"/>
    <property type="match status" value="1"/>
</dbReference>
<dbReference type="PROSITE" id="PS51918">
    <property type="entry name" value="RADICAL_SAM"/>
    <property type="match status" value="1"/>
</dbReference>
<comment type="function">
    <text evidence="1">Catalyzes the radical-mediated insertion of two sulfur atoms into the C-6 and C-8 positions of the octanoyl moiety bound to the lipoyl domains of lipoate-dependent enzymes, thereby converting the octanoylated domains into lipoylated derivatives.</text>
</comment>
<comment type="catalytic activity">
    <reaction evidence="1">
        <text>[[Fe-S] cluster scaffold protein carrying a second [4Fe-4S](2+) cluster] + N(6)-octanoyl-L-lysyl-[protein] + 2 oxidized [2Fe-2S]-[ferredoxin] + 2 S-adenosyl-L-methionine + 4 H(+) = [[Fe-S] cluster scaffold protein] + N(6)-[(R)-dihydrolipoyl]-L-lysyl-[protein] + 4 Fe(3+) + 2 hydrogen sulfide + 2 5'-deoxyadenosine + 2 L-methionine + 2 reduced [2Fe-2S]-[ferredoxin]</text>
        <dbReference type="Rhea" id="RHEA:16585"/>
        <dbReference type="Rhea" id="RHEA-COMP:9928"/>
        <dbReference type="Rhea" id="RHEA-COMP:10000"/>
        <dbReference type="Rhea" id="RHEA-COMP:10001"/>
        <dbReference type="Rhea" id="RHEA-COMP:10475"/>
        <dbReference type="Rhea" id="RHEA-COMP:14568"/>
        <dbReference type="Rhea" id="RHEA-COMP:14569"/>
        <dbReference type="ChEBI" id="CHEBI:15378"/>
        <dbReference type="ChEBI" id="CHEBI:17319"/>
        <dbReference type="ChEBI" id="CHEBI:29034"/>
        <dbReference type="ChEBI" id="CHEBI:29919"/>
        <dbReference type="ChEBI" id="CHEBI:33722"/>
        <dbReference type="ChEBI" id="CHEBI:33737"/>
        <dbReference type="ChEBI" id="CHEBI:33738"/>
        <dbReference type="ChEBI" id="CHEBI:57844"/>
        <dbReference type="ChEBI" id="CHEBI:59789"/>
        <dbReference type="ChEBI" id="CHEBI:78809"/>
        <dbReference type="ChEBI" id="CHEBI:83100"/>
        <dbReference type="EC" id="2.8.1.8"/>
    </reaction>
</comment>
<comment type="cofactor">
    <cofactor evidence="1">
        <name>[4Fe-4S] cluster</name>
        <dbReference type="ChEBI" id="CHEBI:49883"/>
    </cofactor>
    <text evidence="1">Binds 2 [4Fe-4S] clusters per subunit. One cluster is coordinated with 3 cysteines and an exchangeable S-adenosyl-L-methionine.</text>
</comment>
<comment type="pathway">
    <text evidence="1">Protein modification; protein lipoylation via endogenous pathway; protein N(6)-(lipoyl)lysine from octanoyl-[acyl-carrier-protein]: step 2/2.</text>
</comment>
<comment type="subcellular location">
    <subcellularLocation>
        <location evidence="1">Cytoplasm</location>
    </subcellularLocation>
</comment>
<comment type="similarity">
    <text evidence="1">Belongs to the radical SAM superfamily. Lipoyl synthase family.</text>
</comment>
<proteinExistence type="inferred from homology"/>
<name>LIPA_FRACC</name>
<organism>
    <name type="scientific">Frankia casuarinae (strain DSM 45818 / CECT 9043 / HFP020203 / CcI3)</name>
    <dbReference type="NCBI Taxonomy" id="106370"/>
    <lineage>
        <taxon>Bacteria</taxon>
        <taxon>Bacillati</taxon>
        <taxon>Actinomycetota</taxon>
        <taxon>Actinomycetes</taxon>
        <taxon>Frankiales</taxon>
        <taxon>Frankiaceae</taxon>
        <taxon>Frankia</taxon>
    </lineage>
</organism>
<keyword id="KW-0004">4Fe-4S</keyword>
<keyword id="KW-0963">Cytoplasm</keyword>
<keyword id="KW-0408">Iron</keyword>
<keyword id="KW-0411">Iron-sulfur</keyword>
<keyword id="KW-0479">Metal-binding</keyword>
<keyword id="KW-1185">Reference proteome</keyword>
<keyword id="KW-0949">S-adenosyl-L-methionine</keyword>
<keyword id="KW-0808">Transferase</keyword>